<keyword id="KW-0963">Cytoplasm</keyword>
<keyword id="KW-0704">Schiff base</keyword>
<keyword id="KW-0784">Thiamine biosynthesis</keyword>
<keyword id="KW-0808">Transferase</keyword>
<sequence>MDSLHIGSYTFSSRLILGTGKFSSPGVMLEAVKASGAQLVTVALRRFNREQPGDDLFTPLTSIPGITLMPNTSGASTAAEAVQAARIARELSGSPFIKVEIHPNPQHLMPDPIETYEASKILAKEGFLVMPYIPADPVLAKRLEEAGCVSVMPLGSAIGSGQGLATAEMLKIIIRESTIPVIVDAGLRSPSEAALAMEMGCDAVLVNSAVAVAGNPPVMAEAFAEAVAAGRKAFTAGIMEKSGMAVATSPLTSFLGTEA</sequence>
<evidence type="ECO:0000255" key="1">
    <source>
        <dbReference type="HAMAP-Rule" id="MF_00443"/>
    </source>
</evidence>
<protein>
    <recommendedName>
        <fullName evidence="1">Thiazole synthase</fullName>
        <ecNumber evidence="1">2.8.1.10</ecNumber>
    </recommendedName>
</protein>
<feature type="chain" id="PRO_1000124612" description="Thiazole synthase">
    <location>
        <begin position="1"/>
        <end position="259"/>
    </location>
</feature>
<feature type="active site" description="Schiff-base intermediate with DXP" evidence="1">
    <location>
        <position position="98"/>
    </location>
</feature>
<feature type="binding site" evidence="1">
    <location>
        <position position="159"/>
    </location>
    <ligand>
        <name>1-deoxy-D-xylulose 5-phosphate</name>
        <dbReference type="ChEBI" id="CHEBI:57792"/>
    </ligand>
</feature>
<feature type="binding site" evidence="1">
    <location>
        <begin position="185"/>
        <end position="186"/>
    </location>
    <ligand>
        <name>1-deoxy-D-xylulose 5-phosphate</name>
        <dbReference type="ChEBI" id="CHEBI:57792"/>
    </ligand>
</feature>
<feature type="binding site" evidence="1">
    <location>
        <begin position="207"/>
        <end position="208"/>
    </location>
    <ligand>
        <name>1-deoxy-D-xylulose 5-phosphate</name>
        <dbReference type="ChEBI" id="CHEBI:57792"/>
    </ligand>
</feature>
<accession>B3EH68</accession>
<reference key="1">
    <citation type="submission" date="2008-05" db="EMBL/GenBank/DDBJ databases">
        <title>Complete sequence of Chlorobium limicola DSM 245.</title>
        <authorList>
            <consortium name="US DOE Joint Genome Institute"/>
            <person name="Lucas S."/>
            <person name="Copeland A."/>
            <person name="Lapidus A."/>
            <person name="Glavina del Rio T."/>
            <person name="Dalin E."/>
            <person name="Tice H."/>
            <person name="Bruce D."/>
            <person name="Goodwin L."/>
            <person name="Pitluck S."/>
            <person name="Schmutz J."/>
            <person name="Larimer F."/>
            <person name="Land M."/>
            <person name="Hauser L."/>
            <person name="Kyrpides N."/>
            <person name="Ovchinnikova G."/>
            <person name="Zhao F."/>
            <person name="Li T."/>
            <person name="Liu Z."/>
            <person name="Overmann J."/>
            <person name="Bryant D.A."/>
            <person name="Richardson P."/>
        </authorList>
    </citation>
    <scope>NUCLEOTIDE SEQUENCE [LARGE SCALE GENOMIC DNA]</scope>
    <source>
        <strain>DSM 245 / NBRC 103803 / 6330</strain>
    </source>
</reference>
<comment type="function">
    <text evidence="1">Catalyzes the rearrangement of 1-deoxy-D-xylulose 5-phosphate (DXP) to produce the thiazole phosphate moiety of thiamine. Sulfur is provided by the thiocarboxylate moiety of the carrier protein ThiS. In vitro, sulfur can be provided by H(2)S.</text>
</comment>
<comment type="catalytic activity">
    <reaction evidence="1">
        <text>[ThiS sulfur-carrier protein]-C-terminal-Gly-aminoethanethioate + 2-iminoacetate + 1-deoxy-D-xylulose 5-phosphate = [ThiS sulfur-carrier protein]-C-terminal Gly-Gly + 2-[(2R,5Z)-2-carboxy-4-methylthiazol-5(2H)-ylidene]ethyl phosphate + 2 H2O + H(+)</text>
        <dbReference type="Rhea" id="RHEA:26297"/>
        <dbReference type="Rhea" id="RHEA-COMP:12909"/>
        <dbReference type="Rhea" id="RHEA-COMP:19908"/>
        <dbReference type="ChEBI" id="CHEBI:15377"/>
        <dbReference type="ChEBI" id="CHEBI:15378"/>
        <dbReference type="ChEBI" id="CHEBI:57792"/>
        <dbReference type="ChEBI" id="CHEBI:62899"/>
        <dbReference type="ChEBI" id="CHEBI:77846"/>
        <dbReference type="ChEBI" id="CHEBI:90778"/>
        <dbReference type="ChEBI" id="CHEBI:232372"/>
        <dbReference type="EC" id="2.8.1.10"/>
    </reaction>
</comment>
<comment type="pathway">
    <text evidence="1">Cofactor biosynthesis; thiamine diphosphate biosynthesis.</text>
</comment>
<comment type="subunit">
    <text evidence="1">Homotetramer. Forms heterodimers with either ThiH or ThiS.</text>
</comment>
<comment type="subcellular location">
    <subcellularLocation>
        <location evidence="1">Cytoplasm</location>
    </subcellularLocation>
</comment>
<comment type="similarity">
    <text evidence="1">Belongs to the ThiG family.</text>
</comment>
<proteinExistence type="inferred from homology"/>
<name>THIG_CHLL2</name>
<dbReference type="EC" id="2.8.1.10" evidence="1"/>
<dbReference type="EMBL" id="CP001097">
    <property type="protein sequence ID" value="ACD89748.1"/>
    <property type="molecule type" value="Genomic_DNA"/>
</dbReference>
<dbReference type="RefSeq" id="WP_012465629.1">
    <property type="nucleotide sequence ID" value="NC_010803.1"/>
</dbReference>
<dbReference type="SMR" id="B3EH68"/>
<dbReference type="STRING" id="290315.Clim_0665"/>
<dbReference type="KEGG" id="cli:Clim_0665"/>
<dbReference type="eggNOG" id="COG2022">
    <property type="taxonomic scope" value="Bacteria"/>
</dbReference>
<dbReference type="HOGENOM" id="CLU_062233_1_0_10"/>
<dbReference type="OrthoDB" id="9805935at2"/>
<dbReference type="UniPathway" id="UPA00060"/>
<dbReference type="Proteomes" id="UP000008841">
    <property type="component" value="Chromosome"/>
</dbReference>
<dbReference type="GO" id="GO:0005737">
    <property type="term" value="C:cytoplasm"/>
    <property type="evidence" value="ECO:0007669"/>
    <property type="project" value="UniProtKB-SubCell"/>
</dbReference>
<dbReference type="GO" id="GO:1990107">
    <property type="term" value="F:thiazole synthase activity"/>
    <property type="evidence" value="ECO:0007669"/>
    <property type="project" value="UniProtKB-EC"/>
</dbReference>
<dbReference type="GO" id="GO:0009229">
    <property type="term" value="P:thiamine diphosphate biosynthetic process"/>
    <property type="evidence" value="ECO:0007669"/>
    <property type="project" value="UniProtKB-UniRule"/>
</dbReference>
<dbReference type="CDD" id="cd04728">
    <property type="entry name" value="ThiG"/>
    <property type="match status" value="1"/>
</dbReference>
<dbReference type="Gene3D" id="3.20.20.70">
    <property type="entry name" value="Aldolase class I"/>
    <property type="match status" value="1"/>
</dbReference>
<dbReference type="HAMAP" id="MF_00443">
    <property type="entry name" value="ThiG"/>
    <property type="match status" value="1"/>
</dbReference>
<dbReference type="InterPro" id="IPR013785">
    <property type="entry name" value="Aldolase_TIM"/>
</dbReference>
<dbReference type="InterPro" id="IPR033983">
    <property type="entry name" value="Thiazole_synthase_ThiG"/>
</dbReference>
<dbReference type="InterPro" id="IPR008867">
    <property type="entry name" value="ThiG"/>
</dbReference>
<dbReference type="PANTHER" id="PTHR34266">
    <property type="entry name" value="THIAZOLE SYNTHASE"/>
    <property type="match status" value="1"/>
</dbReference>
<dbReference type="PANTHER" id="PTHR34266:SF2">
    <property type="entry name" value="THIAZOLE SYNTHASE"/>
    <property type="match status" value="1"/>
</dbReference>
<dbReference type="Pfam" id="PF05690">
    <property type="entry name" value="ThiG"/>
    <property type="match status" value="1"/>
</dbReference>
<dbReference type="SUPFAM" id="SSF110399">
    <property type="entry name" value="ThiG-like"/>
    <property type="match status" value="1"/>
</dbReference>
<gene>
    <name evidence="1" type="primary">thiG</name>
    <name type="ordered locus">Clim_0665</name>
</gene>
<organism>
    <name type="scientific">Chlorobium limicola (strain DSM 245 / NBRC 103803 / 6330)</name>
    <dbReference type="NCBI Taxonomy" id="290315"/>
    <lineage>
        <taxon>Bacteria</taxon>
        <taxon>Pseudomonadati</taxon>
        <taxon>Chlorobiota</taxon>
        <taxon>Chlorobiia</taxon>
        <taxon>Chlorobiales</taxon>
        <taxon>Chlorobiaceae</taxon>
        <taxon>Chlorobium/Pelodictyon group</taxon>
        <taxon>Chlorobium</taxon>
    </lineage>
</organism>